<comment type="function">
    <text evidence="1">Plays an essential role in the virus replication cycle by acting as a viroporin. Creates a pore in the host endoplasmic reticulum and as a consequence releases Ca(2+) in the cytoplasm of infected cell. In turn, high levels of cytoplasmic calcium trigger membrane trafficking and transport of viral ER-associated proteins to viroplasms, sites of viral genome replication and immature particle assembly.</text>
</comment>
<comment type="function">
    <text evidence="1">The secreted form acts as an enterotoxin that causes phospholipase C-dependent elevation of the intracellular calcium concentration in host intestinal mucosa cells. Increased concentration of intracellular calcium disrupts the cytoskeleton and the tight junctions, raising the paracellular permeability. Potentiates chloride ion secretion through a calcium ion-dependent signaling pathway, inducing age-dependent diarrhea. To perform this enterotoxigenic role in vivo, NSP4 is released from infected enterocytes in a soluble form capable of diffusing within the intestinal lumen and interacting with host plasma membrane receptors on neighboring epithelial cells such as integrins ITGA1/ITGB1 and ITGA2/ITGB1.</text>
</comment>
<comment type="subunit">
    <text evidence="1">Homotetramer. Interacts with the immature particle in the viroplasm. Interacts with host CAV1, early and late in infection. Interacts with host integrin ITGA1/ITGB1 heterodimer. Interacts with host integrin ITGA2/ITGB1 heterodimer. Interaction with microtubules blocks trafficking to the Golgi apparatus.</text>
</comment>
<comment type="subcellular location">
    <subcellularLocation>
        <location evidence="1">Host rough endoplasmic reticulum membrane</location>
        <topology evidence="1">Single-pass type III membrane protein</topology>
    </subcellularLocation>
    <subcellularLocation>
        <location evidence="1">Host membrane</location>
        <location evidence="1">Host caveola</location>
        <topology evidence="1">Single-pass type III membrane protein</topology>
    </subcellularLocation>
    <subcellularLocation>
        <location evidence="1">Secreted</location>
    </subcellularLocation>
    <text evidence="1">NSP4 also localizes in vesicular structures which contain autophagosomal markers and associate with viroplasms in virus-infected cells. Additionally, a soluble form of glycosylated NSP4 is secreted despite retention of its transmembrane domain.</text>
</comment>
<comment type="domain">
    <text evidence="1">Binds 1 calcium ion per tetramer.</text>
</comment>
<comment type="PTM">
    <text evidence="1">The N-glycosyl content is primarily Man(9)GlcNAc, with a small amount of Man(8)GlcNAc.</text>
</comment>
<comment type="similarity">
    <text evidence="1">Belongs to the rotavirus NSP4 family.</text>
</comment>
<reference key="1">
    <citation type="journal article" date="2008" name="J. Virol.">
        <title>Group A human rotavirus genomics: evidence that gene constellations are influenced by viral protein interactions.</title>
        <authorList>
            <person name="Heiman E.M."/>
            <person name="McDonald S.M."/>
            <person name="Barro M."/>
            <person name="Taraporewala Z.F."/>
            <person name="Bar-Magen T."/>
            <person name="Patton J.T."/>
        </authorList>
    </citation>
    <scope>NUCLEOTIDE SEQUENCE [GENOMIC RNA]</scope>
</reference>
<organismHost>
    <name type="scientific">Homo sapiens</name>
    <name type="common">Human</name>
    <dbReference type="NCBI Taxonomy" id="9606"/>
</organismHost>
<dbReference type="EMBL" id="EF672624">
    <property type="protein sequence ID" value="ABV53305.1"/>
    <property type="molecule type" value="Genomic_RNA"/>
</dbReference>
<dbReference type="Proteomes" id="UP000006580">
    <property type="component" value="Genome"/>
</dbReference>
<dbReference type="GO" id="GO:0005576">
    <property type="term" value="C:extracellular region"/>
    <property type="evidence" value="ECO:0007669"/>
    <property type="project" value="UniProtKB-SubCell"/>
</dbReference>
<dbReference type="GO" id="GO:0044155">
    <property type="term" value="C:host caveola"/>
    <property type="evidence" value="ECO:0007669"/>
    <property type="project" value="UniProtKB-SubCell"/>
</dbReference>
<dbReference type="GO" id="GO:0044169">
    <property type="term" value="C:host cell rough endoplasmic reticulum membrane"/>
    <property type="evidence" value="ECO:0007669"/>
    <property type="project" value="UniProtKB-SubCell"/>
</dbReference>
<dbReference type="GO" id="GO:0016020">
    <property type="term" value="C:membrane"/>
    <property type="evidence" value="ECO:0007669"/>
    <property type="project" value="UniProtKB-UniRule"/>
</dbReference>
<dbReference type="GO" id="GO:0015267">
    <property type="term" value="F:channel activity"/>
    <property type="evidence" value="ECO:0007669"/>
    <property type="project" value="UniProtKB-KW"/>
</dbReference>
<dbReference type="GO" id="GO:0046872">
    <property type="term" value="F:metal ion binding"/>
    <property type="evidence" value="ECO:0007669"/>
    <property type="project" value="UniProtKB-UniRule"/>
</dbReference>
<dbReference type="GO" id="GO:0090729">
    <property type="term" value="F:toxin activity"/>
    <property type="evidence" value="ECO:0007669"/>
    <property type="project" value="UniProtKB-UniRule"/>
</dbReference>
<dbReference type="GO" id="GO:0034220">
    <property type="term" value="P:monoatomic ion transmembrane transport"/>
    <property type="evidence" value="ECO:0007669"/>
    <property type="project" value="UniProtKB-KW"/>
</dbReference>
<dbReference type="GO" id="GO:0039520">
    <property type="term" value="P:symbiont-mediated activation of host autophagy"/>
    <property type="evidence" value="ECO:0007669"/>
    <property type="project" value="UniProtKB-KW"/>
</dbReference>
<dbReference type="GO" id="GO:0016032">
    <property type="term" value="P:viral process"/>
    <property type="evidence" value="ECO:0007669"/>
    <property type="project" value="UniProtKB-UniRule"/>
</dbReference>
<dbReference type="Gene3D" id="1.20.5.430">
    <property type="match status" value="1"/>
</dbReference>
<dbReference type="HAMAP" id="MF_04091">
    <property type="entry name" value="ROTA_NSP4"/>
    <property type="match status" value="1"/>
</dbReference>
<dbReference type="InterPro" id="IPR002107">
    <property type="entry name" value="Rotavirus_NSP4"/>
</dbReference>
<dbReference type="Pfam" id="PF01452">
    <property type="entry name" value="Rota_NSP4"/>
    <property type="match status" value="1"/>
</dbReference>
<dbReference type="SUPFAM" id="SSF58030">
    <property type="entry name" value="Rotavirus nonstructural proteins"/>
    <property type="match status" value="1"/>
</dbReference>
<protein>
    <recommendedName>
        <fullName evidence="1">Non-structural glycoprotein 4</fullName>
        <shortName evidence="1">NSP4</shortName>
    </recommendedName>
    <alternativeName>
        <fullName evidence="1">NCVP5</fullName>
    </alternativeName>
    <alternativeName>
        <fullName evidence="1">NS28</fullName>
    </alternativeName>
</protein>
<organism>
    <name type="scientific">Rotavirus A (isolate RVA/Human/United States/WI61/1983/G9P1A[8])</name>
    <name type="common">RV-A</name>
    <dbReference type="NCBI Taxonomy" id="578830"/>
    <lineage>
        <taxon>Viruses</taxon>
        <taxon>Riboviria</taxon>
        <taxon>Orthornavirae</taxon>
        <taxon>Duplornaviricota</taxon>
        <taxon>Resentoviricetes</taxon>
        <taxon>Reovirales</taxon>
        <taxon>Sedoreoviridae</taxon>
        <taxon>Rotavirus</taxon>
        <taxon>Rotavirus A</taxon>
    </lineage>
</organism>
<name>NSP4_ROTWI</name>
<proteinExistence type="inferred from homology"/>
<sequence length="175" mass="20231">MDKFADLNYTLSVITLMNDTLHSIIQDPGMAYFPYIASVLTVLFTLHKASIPTMKIALKTSKCSYKVIKCCIVTIINTLLKLAGYKEQVTTKDEIEQQMDRIVKEMRRQLEMIDKLTTREIEQVELLKRIHDNLIIKPVDVIDMSKEFNQKNIKTLDEWESGKNPYEPLEVTASM</sequence>
<evidence type="ECO:0000255" key="1">
    <source>
        <dbReference type="HAMAP-Rule" id="MF_04091"/>
    </source>
</evidence>
<keyword id="KW-1072">Activation of host autophagy by virus</keyword>
<keyword id="KW-0106">Calcium</keyword>
<keyword id="KW-0260">Enterotoxin</keyword>
<keyword id="KW-0325">Glycoprotein</keyword>
<keyword id="KW-1038">Host endoplasmic reticulum</keyword>
<keyword id="KW-1043">Host membrane</keyword>
<keyword id="KW-0945">Host-virus interaction</keyword>
<keyword id="KW-0407">Ion channel</keyword>
<keyword id="KW-0406">Ion transport</keyword>
<keyword id="KW-0472">Membrane</keyword>
<keyword id="KW-0479">Metal-binding</keyword>
<keyword id="KW-0964">Secreted</keyword>
<keyword id="KW-0735">Signal-anchor</keyword>
<keyword id="KW-0800">Toxin</keyword>
<keyword id="KW-0812">Transmembrane</keyword>
<keyword id="KW-1133">Transmembrane helix</keyword>
<keyword id="KW-0813">Transport</keyword>
<keyword id="KW-1182">Viral ion channel</keyword>
<keyword id="KW-0843">Virulence</keyword>
<accession>B3SRY0</accession>
<feature type="chain" id="PRO_0000369469" description="Non-structural glycoprotein 4">
    <location>
        <begin position="1"/>
        <end position="175"/>
    </location>
</feature>
<feature type="topological domain" description="Lumenal" evidence="1">
    <location>
        <begin position="1"/>
        <end position="28"/>
    </location>
</feature>
<feature type="transmembrane region" description="Helical; Signal-anchor for type III membrane protein" evidence="1">
    <location>
        <begin position="29"/>
        <end position="51"/>
    </location>
</feature>
<feature type="topological domain" description="Cytoplasmic" evidence="1">
    <location>
        <begin position="52"/>
        <end position="175"/>
    </location>
</feature>
<feature type="binding site" evidence="1">
    <location>
        <position position="120"/>
    </location>
    <ligand>
        <name>Ca(2+)</name>
        <dbReference type="ChEBI" id="CHEBI:29108"/>
    </ligand>
</feature>
<feature type="binding site" evidence="1">
    <location>
        <position position="123"/>
    </location>
    <ligand>
        <name>Ca(2+)</name>
        <dbReference type="ChEBI" id="CHEBI:29108"/>
    </ligand>
</feature>
<feature type="glycosylation site" description="N-linked (GlcNAc...) asparagine; by host" evidence="1">
    <location>
        <position position="8"/>
    </location>
</feature>
<feature type="glycosylation site" description="N-linked (GlcNAc...) asparagine; by host" evidence="1">
    <location>
        <position position="18"/>
    </location>
</feature>